<gene>
    <name type="primary">PAL2</name>
</gene>
<feature type="chain" id="PRO_0000215388" description="Phenylalanine ammonia-lyase 2">
    <location>
        <begin position="1"/>
        <end position="718"/>
    </location>
</feature>
<feature type="active site" description="Proton donor/acceptor" evidence="3">
    <location>
        <position position="110"/>
    </location>
</feature>
<feature type="binding site" evidence="3">
    <location>
        <position position="262"/>
    </location>
    <ligand>
        <name>(E)-cinnamate</name>
        <dbReference type="ChEBI" id="CHEBI:15669"/>
    </ligand>
</feature>
<feature type="binding site" evidence="3">
    <location>
        <position position="350"/>
    </location>
    <ligand>
        <name>(E)-cinnamate</name>
        <dbReference type="ChEBI" id="CHEBI:15669"/>
    </ligand>
</feature>
<feature type="binding site" evidence="3">
    <location>
        <position position="356"/>
    </location>
    <ligand>
        <name>(E)-cinnamate</name>
        <dbReference type="ChEBI" id="CHEBI:15669"/>
    </ligand>
</feature>
<feature type="binding site" evidence="3">
    <location>
        <position position="386"/>
    </location>
    <ligand>
        <name>(E)-cinnamate</name>
        <dbReference type="ChEBI" id="CHEBI:15669"/>
    </ligand>
</feature>
<feature type="binding site" evidence="1">
    <location>
        <position position="458"/>
    </location>
    <ligand>
        <name>(E)-cinnamate</name>
        <dbReference type="ChEBI" id="CHEBI:15669"/>
    </ligand>
</feature>
<feature type="binding site" evidence="1">
    <location>
        <position position="486"/>
    </location>
    <ligand>
        <name>(E)-cinnamate</name>
        <dbReference type="ChEBI" id="CHEBI:15669"/>
    </ligand>
</feature>
<feature type="binding site" evidence="3">
    <location>
        <position position="489"/>
    </location>
    <ligand>
        <name>(E)-cinnamate</name>
        <dbReference type="ChEBI" id="CHEBI:15669"/>
    </ligand>
</feature>
<feature type="modified residue" description="2,3-didehydroalanine (Ser)" evidence="4">
    <location>
        <position position="205"/>
    </location>
</feature>
<feature type="cross-link" description="5-imidazolinone (Ala-Gly)" evidence="3">
    <location>
        <begin position="204"/>
        <end position="206"/>
    </location>
</feature>
<organism>
    <name type="scientific">Cicer arietinum</name>
    <name type="common">Chickpea</name>
    <name type="synonym">Garbanzo</name>
    <dbReference type="NCBI Taxonomy" id="3827"/>
    <lineage>
        <taxon>Eukaryota</taxon>
        <taxon>Viridiplantae</taxon>
        <taxon>Streptophyta</taxon>
        <taxon>Embryophyta</taxon>
        <taxon>Tracheophyta</taxon>
        <taxon>Spermatophyta</taxon>
        <taxon>Magnoliopsida</taxon>
        <taxon>eudicotyledons</taxon>
        <taxon>Gunneridae</taxon>
        <taxon>Pentapetalae</taxon>
        <taxon>rosids</taxon>
        <taxon>fabids</taxon>
        <taxon>Fabales</taxon>
        <taxon>Fabaceae</taxon>
        <taxon>Papilionoideae</taxon>
        <taxon>50 kb inversion clade</taxon>
        <taxon>NPAAA clade</taxon>
        <taxon>Hologalegina</taxon>
        <taxon>IRL clade</taxon>
        <taxon>Cicereae</taxon>
        <taxon>Cicer</taxon>
    </lineage>
</organism>
<keyword id="KW-0963">Cytoplasm</keyword>
<keyword id="KW-0456">Lyase</keyword>
<keyword id="KW-0585">Phenylalanine catabolism</keyword>
<keyword id="KW-0587">Phenylpropanoid metabolism</keyword>
<keyword id="KW-1185">Reference proteome</keyword>
<accession>Q9SMK9</accession>
<evidence type="ECO:0000250" key="1">
    <source>
        <dbReference type="UniProtKB" id="P11544"/>
    </source>
</evidence>
<evidence type="ECO:0000250" key="2">
    <source>
        <dbReference type="UniProtKB" id="P24481"/>
    </source>
</evidence>
<evidence type="ECO:0000250" key="3">
    <source>
        <dbReference type="UniProtKB" id="Q68G84"/>
    </source>
</evidence>
<evidence type="ECO:0000255" key="4">
    <source>
        <dbReference type="PROSITE-ProRule" id="PRU10122"/>
    </source>
</evidence>
<evidence type="ECO:0000305" key="5"/>
<reference key="1">
    <citation type="online journal article" date="2000" name="Plant Gene Register">
        <title>Cloning and characterization of a full length cDNA encoding phenylalanine ammonia-lyase (PAL) from chickpea (Cicer arietinum L.).</title>
        <authorList>
            <person name="Hein F."/>
            <person name="Overkamp S."/>
            <person name="Barz W."/>
        </authorList>
        <locator>PGR00-038</locator>
    </citation>
    <scope>NUCLEOTIDE SEQUENCE [MRNA]</scope>
    <source>
        <strain>cv. ILC 3279</strain>
    </source>
</reference>
<comment type="function">
    <text evidence="2">This is a key enzyme of plant metabolism catalyzing the first reaction in the biosynthesis from L-phenylalanine of a wide variety of natural products based on the phenylpropane skeleton.</text>
</comment>
<comment type="catalytic activity">
    <reaction evidence="2">
        <text>L-phenylalanine = (E)-cinnamate + NH4(+)</text>
        <dbReference type="Rhea" id="RHEA:21384"/>
        <dbReference type="ChEBI" id="CHEBI:15669"/>
        <dbReference type="ChEBI" id="CHEBI:28938"/>
        <dbReference type="ChEBI" id="CHEBI:58095"/>
        <dbReference type="EC" id="4.3.1.24"/>
    </reaction>
</comment>
<comment type="pathway">
    <text evidence="5">Phenylpropanoid metabolism; trans-cinnamate biosynthesis; trans-cinnamate from L-phenylalanine: step 1/1.</text>
</comment>
<comment type="subunit">
    <text evidence="2">Homotetramer.</text>
</comment>
<comment type="subcellular location">
    <subcellularLocation>
        <location evidence="5">Cytoplasm</location>
    </subcellularLocation>
</comment>
<comment type="PTM">
    <text evidence="3">Contains an active site 4-methylidene-imidazol-5-one (MIO), which is formed autocatalytically by cyclization and dehydration of residues Ala-Ser-Gly.</text>
</comment>
<comment type="similarity">
    <text evidence="5">Belongs to the PAL/histidase family.</text>
</comment>
<dbReference type="EC" id="4.3.1.24" evidence="2"/>
<dbReference type="EMBL" id="AJ250836">
    <property type="protein sequence ID" value="CAB60719.1"/>
    <property type="molecule type" value="mRNA"/>
</dbReference>
<dbReference type="RefSeq" id="NP_001266106.1">
    <property type="nucleotide sequence ID" value="NM_001279177.1"/>
</dbReference>
<dbReference type="RefSeq" id="XP_012570018.1">
    <property type="nucleotide sequence ID" value="XM_012714564.1"/>
</dbReference>
<dbReference type="SMR" id="Q9SMK9"/>
<dbReference type="STRING" id="3827.Q9SMK9"/>
<dbReference type="PaxDb" id="3827-XP_004496257.1"/>
<dbReference type="GeneID" id="101509831"/>
<dbReference type="KEGG" id="cam:101509831"/>
<dbReference type="eggNOG" id="KOG0222">
    <property type="taxonomic scope" value="Eukaryota"/>
</dbReference>
<dbReference type="OrthoDB" id="10051290at2759"/>
<dbReference type="UniPathway" id="UPA00713">
    <property type="reaction ID" value="UER00725"/>
</dbReference>
<dbReference type="Proteomes" id="UP000087171">
    <property type="component" value="Chromosome Ca4"/>
</dbReference>
<dbReference type="GO" id="GO:0005737">
    <property type="term" value="C:cytoplasm"/>
    <property type="evidence" value="ECO:0007669"/>
    <property type="project" value="UniProtKB-SubCell"/>
</dbReference>
<dbReference type="GO" id="GO:0045548">
    <property type="term" value="F:phenylalanine ammonia-lyase activity"/>
    <property type="evidence" value="ECO:0007669"/>
    <property type="project" value="UniProtKB-EC"/>
</dbReference>
<dbReference type="GO" id="GO:0009800">
    <property type="term" value="P:cinnamic acid biosynthetic process"/>
    <property type="evidence" value="ECO:0007669"/>
    <property type="project" value="UniProtKB-UniPathway"/>
</dbReference>
<dbReference type="GO" id="GO:0006559">
    <property type="term" value="P:L-phenylalanine catabolic process"/>
    <property type="evidence" value="ECO:0007669"/>
    <property type="project" value="UniProtKB-KW"/>
</dbReference>
<dbReference type="CDD" id="cd00332">
    <property type="entry name" value="PAL-HAL"/>
    <property type="match status" value="1"/>
</dbReference>
<dbReference type="FunFam" id="1.10.274.20:FF:000001">
    <property type="entry name" value="Phenylalanine ammonia-lyase"/>
    <property type="match status" value="1"/>
</dbReference>
<dbReference type="FunFam" id="1.10.275.10:FF:000009">
    <property type="entry name" value="Phenylalanine ammonia-lyase"/>
    <property type="match status" value="1"/>
</dbReference>
<dbReference type="FunFam" id="1.20.200.10:FF:000009">
    <property type="entry name" value="Phenylalanine ammonia-lyase"/>
    <property type="match status" value="1"/>
</dbReference>
<dbReference type="Gene3D" id="1.20.200.10">
    <property type="entry name" value="Fumarase/aspartase (Central domain)"/>
    <property type="match status" value="1"/>
</dbReference>
<dbReference type="Gene3D" id="1.10.275.10">
    <property type="entry name" value="Fumarase/aspartase (N-terminal domain)"/>
    <property type="match status" value="1"/>
</dbReference>
<dbReference type="Gene3D" id="1.10.274.20">
    <property type="entry name" value="Phenylalanine ammonia-lyase 1, domain 3"/>
    <property type="match status" value="1"/>
</dbReference>
<dbReference type="InterPro" id="IPR001106">
    <property type="entry name" value="Aromatic_Lyase"/>
</dbReference>
<dbReference type="InterPro" id="IPR024083">
    <property type="entry name" value="Fumarase/histidase_N"/>
</dbReference>
<dbReference type="InterPro" id="IPR008948">
    <property type="entry name" value="L-Aspartase-like"/>
</dbReference>
<dbReference type="InterPro" id="IPR022313">
    <property type="entry name" value="Phe/His_NH3-lyase_AS"/>
</dbReference>
<dbReference type="InterPro" id="IPR005922">
    <property type="entry name" value="Phe_NH3-lyase"/>
</dbReference>
<dbReference type="InterPro" id="IPR023144">
    <property type="entry name" value="Phe_NH3-lyase_shielding_dom_sf"/>
</dbReference>
<dbReference type="NCBIfam" id="TIGR01226">
    <property type="entry name" value="phe_am_lyase"/>
    <property type="match status" value="1"/>
</dbReference>
<dbReference type="PANTHER" id="PTHR10362">
    <property type="entry name" value="HISTIDINE AMMONIA-LYASE"/>
    <property type="match status" value="1"/>
</dbReference>
<dbReference type="Pfam" id="PF00221">
    <property type="entry name" value="Lyase_aromatic"/>
    <property type="match status" value="1"/>
</dbReference>
<dbReference type="SUPFAM" id="SSF48557">
    <property type="entry name" value="L-aspartase-like"/>
    <property type="match status" value="1"/>
</dbReference>
<dbReference type="PROSITE" id="PS00488">
    <property type="entry name" value="PAL_HISTIDASE"/>
    <property type="match status" value="1"/>
</dbReference>
<proteinExistence type="evidence at transcript level"/>
<name>PAL2_CICAR</name>
<protein>
    <recommendedName>
        <fullName>Phenylalanine ammonia-lyase 2</fullName>
        <ecNumber evidence="2">4.3.1.24</ecNumber>
    </recommendedName>
</protein>
<sequence length="718" mass="78301">MMELPNGNCNGSSLNVCNGNGNLSNNDSLNWGMAADSMRGSHLDEVKRMVEEYRKAVVPLGGKGLTISQVAAVATQNTGVAVELAEETRYAVKASSDWVVDSMNKGTDSYGVTTGFGATSHRRTKQGGALQNELIRFLNAGIFGNGTESTQTLPHTATRAAMLVRINTLLQGYSGIRFEIMEAIAKFLNHNITPCLPLRGTITASGDLVPLSYVAGLLIGRPNSKSIGPNGQILNAKEAFQLAGIETGFFELQPKEGLALVNGTAVGSGLASLALFETNLLVVLSEILSAIFAEVMQGKPEFTDHLTHKLKHHPGQIEAAAIMEHILDGSYYVKAAQKVHDIDPLQKPKQDRYALRTSPQWLGPQIEVIRNATKMIEREINSVNDNPLIDVSRNKALHGGNFQGTPIGVSMDNTRLAIASIGKLMFAQFSELVNDFYNNGLPSNLTGSRNPSLDYGFKGAEIAMASYCSELQYLANPVTNHVQSAEQHNQDVNSLGLISSRKTAEAVEILKLMSSTFLVALCQAIDLRHIEENLKSVVKNTVSQVAKRVLTVGVNGELHPSRFCEKDLLNVVEREYVFAYIDDPCSATYPLMQKLRHVLVDHALENGDREGNSSTSIFQKIGAFEQELKTLLPKEVESVRVDVENGNPAVPNRIIECRSYPLYKFVRENLGTSLLTGEKIRSPGEECDKVFAALCDGRFIDPMLDCLKEWNGAPLPIC</sequence>